<keyword id="KW-0067">ATP-binding</keyword>
<keyword id="KW-0963">Cytoplasm</keyword>
<keyword id="KW-0227">DNA damage</keyword>
<keyword id="KW-0233">DNA recombination</keyword>
<keyword id="KW-0234">DNA repair</keyword>
<keyword id="KW-0238">DNA-binding</keyword>
<keyword id="KW-0378">Hydrolase</keyword>
<keyword id="KW-0547">Nucleotide-binding</keyword>
<keyword id="KW-1185">Reference proteome</keyword>
<proteinExistence type="inferred from homology"/>
<accession>A3D481</accession>
<sequence length="334" mass="37158">MIEADRLIQPQIQAQDESIDRAMRPKMLDEYTGQDHTRAQLKVFIQAAKNRNEALDHMLIYGPPGLGKTTLAMIVANEMGVNIKSTSGPVLEKAGDLAALLTNLESGDVLFIDEIHRLSPVVEEILYPAMEDYQLDIMIGEGPAARSIKLDLPPFTLVGATTRAGALTSPLRARFGIPLRLEFYNIKDLSTIVTRSAQVMELDIDAEGAFEIARRSRGTPRIANRLLRRVRDYAQVKHDGAVTKFVAEHALDLLDVDSEGFDYMDRKLLLAIIDKFIGGPVGLDNLAAAIGEERETIEDVLEPFLIQQGFIQRTPRGRIATARAYQHFELIKPE</sequence>
<gene>
    <name evidence="1" type="primary">ruvB</name>
    <name type="ordered locus">Sbal_2042</name>
</gene>
<organism>
    <name type="scientific">Shewanella baltica (strain OS155 / ATCC BAA-1091)</name>
    <dbReference type="NCBI Taxonomy" id="325240"/>
    <lineage>
        <taxon>Bacteria</taxon>
        <taxon>Pseudomonadati</taxon>
        <taxon>Pseudomonadota</taxon>
        <taxon>Gammaproteobacteria</taxon>
        <taxon>Alteromonadales</taxon>
        <taxon>Shewanellaceae</taxon>
        <taxon>Shewanella</taxon>
    </lineage>
</organism>
<protein>
    <recommendedName>
        <fullName evidence="1">Holliday junction branch migration complex subunit RuvB</fullName>
        <ecNumber evidence="1">3.6.4.-</ecNumber>
    </recommendedName>
</protein>
<dbReference type="EC" id="3.6.4.-" evidence="1"/>
<dbReference type="EMBL" id="CP000563">
    <property type="protein sequence ID" value="ABN61544.1"/>
    <property type="molecule type" value="Genomic_DNA"/>
</dbReference>
<dbReference type="RefSeq" id="WP_011846756.1">
    <property type="nucleotide sequence ID" value="NC_009052.1"/>
</dbReference>
<dbReference type="SMR" id="A3D481"/>
<dbReference type="STRING" id="325240.Sbal_2042"/>
<dbReference type="KEGG" id="sbl:Sbal_2042"/>
<dbReference type="HOGENOM" id="CLU_055599_1_0_6"/>
<dbReference type="OrthoDB" id="9804478at2"/>
<dbReference type="Proteomes" id="UP000001557">
    <property type="component" value="Chromosome"/>
</dbReference>
<dbReference type="GO" id="GO:0005737">
    <property type="term" value="C:cytoplasm"/>
    <property type="evidence" value="ECO:0007669"/>
    <property type="project" value="UniProtKB-SubCell"/>
</dbReference>
<dbReference type="GO" id="GO:0048476">
    <property type="term" value="C:Holliday junction resolvase complex"/>
    <property type="evidence" value="ECO:0007669"/>
    <property type="project" value="UniProtKB-UniRule"/>
</dbReference>
<dbReference type="GO" id="GO:0005524">
    <property type="term" value="F:ATP binding"/>
    <property type="evidence" value="ECO:0007669"/>
    <property type="project" value="UniProtKB-UniRule"/>
</dbReference>
<dbReference type="GO" id="GO:0016887">
    <property type="term" value="F:ATP hydrolysis activity"/>
    <property type="evidence" value="ECO:0007669"/>
    <property type="project" value="InterPro"/>
</dbReference>
<dbReference type="GO" id="GO:0000400">
    <property type="term" value="F:four-way junction DNA binding"/>
    <property type="evidence" value="ECO:0007669"/>
    <property type="project" value="UniProtKB-UniRule"/>
</dbReference>
<dbReference type="GO" id="GO:0009378">
    <property type="term" value="F:four-way junction helicase activity"/>
    <property type="evidence" value="ECO:0007669"/>
    <property type="project" value="InterPro"/>
</dbReference>
<dbReference type="GO" id="GO:0006310">
    <property type="term" value="P:DNA recombination"/>
    <property type="evidence" value="ECO:0007669"/>
    <property type="project" value="UniProtKB-UniRule"/>
</dbReference>
<dbReference type="GO" id="GO:0006281">
    <property type="term" value="P:DNA repair"/>
    <property type="evidence" value="ECO:0007669"/>
    <property type="project" value="UniProtKB-UniRule"/>
</dbReference>
<dbReference type="CDD" id="cd00009">
    <property type="entry name" value="AAA"/>
    <property type="match status" value="1"/>
</dbReference>
<dbReference type="FunFam" id="1.10.10.10:FF:000086">
    <property type="entry name" value="Holliday junction ATP-dependent DNA helicase RuvB"/>
    <property type="match status" value="1"/>
</dbReference>
<dbReference type="FunFam" id="1.10.8.60:FF:000023">
    <property type="entry name" value="Holliday junction ATP-dependent DNA helicase RuvB"/>
    <property type="match status" value="1"/>
</dbReference>
<dbReference type="FunFam" id="3.40.50.300:FF:000073">
    <property type="entry name" value="Holliday junction ATP-dependent DNA helicase RuvB"/>
    <property type="match status" value="1"/>
</dbReference>
<dbReference type="Gene3D" id="1.10.8.60">
    <property type="match status" value="1"/>
</dbReference>
<dbReference type="Gene3D" id="3.40.50.300">
    <property type="entry name" value="P-loop containing nucleotide triphosphate hydrolases"/>
    <property type="match status" value="1"/>
</dbReference>
<dbReference type="Gene3D" id="1.10.10.10">
    <property type="entry name" value="Winged helix-like DNA-binding domain superfamily/Winged helix DNA-binding domain"/>
    <property type="match status" value="1"/>
</dbReference>
<dbReference type="HAMAP" id="MF_00016">
    <property type="entry name" value="DNA_HJ_migration_RuvB"/>
    <property type="match status" value="1"/>
</dbReference>
<dbReference type="InterPro" id="IPR003593">
    <property type="entry name" value="AAA+_ATPase"/>
</dbReference>
<dbReference type="InterPro" id="IPR041445">
    <property type="entry name" value="AAA_lid_4"/>
</dbReference>
<dbReference type="InterPro" id="IPR004605">
    <property type="entry name" value="DNA_helicase_Holl-junc_RuvB"/>
</dbReference>
<dbReference type="InterPro" id="IPR027417">
    <property type="entry name" value="P-loop_NTPase"/>
</dbReference>
<dbReference type="InterPro" id="IPR008824">
    <property type="entry name" value="RuvB-like_N"/>
</dbReference>
<dbReference type="InterPro" id="IPR008823">
    <property type="entry name" value="RuvB_C"/>
</dbReference>
<dbReference type="InterPro" id="IPR036388">
    <property type="entry name" value="WH-like_DNA-bd_sf"/>
</dbReference>
<dbReference type="InterPro" id="IPR036390">
    <property type="entry name" value="WH_DNA-bd_sf"/>
</dbReference>
<dbReference type="NCBIfam" id="NF000868">
    <property type="entry name" value="PRK00080.1"/>
    <property type="match status" value="1"/>
</dbReference>
<dbReference type="NCBIfam" id="TIGR00635">
    <property type="entry name" value="ruvB"/>
    <property type="match status" value="1"/>
</dbReference>
<dbReference type="PANTHER" id="PTHR42848">
    <property type="match status" value="1"/>
</dbReference>
<dbReference type="PANTHER" id="PTHR42848:SF1">
    <property type="entry name" value="HOLLIDAY JUNCTION BRANCH MIGRATION COMPLEX SUBUNIT RUVB"/>
    <property type="match status" value="1"/>
</dbReference>
<dbReference type="Pfam" id="PF17864">
    <property type="entry name" value="AAA_lid_4"/>
    <property type="match status" value="1"/>
</dbReference>
<dbReference type="Pfam" id="PF05491">
    <property type="entry name" value="RuvB_C"/>
    <property type="match status" value="1"/>
</dbReference>
<dbReference type="Pfam" id="PF05496">
    <property type="entry name" value="RuvB_N"/>
    <property type="match status" value="1"/>
</dbReference>
<dbReference type="SMART" id="SM00382">
    <property type="entry name" value="AAA"/>
    <property type="match status" value="1"/>
</dbReference>
<dbReference type="SUPFAM" id="SSF52540">
    <property type="entry name" value="P-loop containing nucleoside triphosphate hydrolases"/>
    <property type="match status" value="1"/>
</dbReference>
<dbReference type="SUPFAM" id="SSF46785">
    <property type="entry name" value="Winged helix' DNA-binding domain"/>
    <property type="match status" value="1"/>
</dbReference>
<feature type="chain" id="PRO_1000001470" description="Holliday junction branch migration complex subunit RuvB">
    <location>
        <begin position="1"/>
        <end position="334"/>
    </location>
</feature>
<feature type="region of interest" description="Large ATPase domain (RuvB-L)" evidence="1">
    <location>
        <begin position="4"/>
        <end position="184"/>
    </location>
</feature>
<feature type="region of interest" description="Small ATPAse domain (RuvB-S)" evidence="1">
    <location>
        <begin position="185"/>
        <end position="255"/>
    </location>
</feature>
<feature type="region of interest" description="Head domain (RuvB-H)" evidence="1">
    <location>
        <begin position="258"/>
        <end position="334"/>
    </location>
</feature>
<feature type="binding site" evidence="1">
    <location>
        <position position="24"/>
    </location>
    <ligand>
        <name>ATP</name>
        <dbReference type="ChEBI" id="CHEBI:30616"/>
    </ligand>
</feature>
<feature type="binding site" evidence="1">
    <location>
        <position position="65"/>
    </location>
    <ligand>
        <name>ATP</name>
        <dbReference type="ChEBI" id="CHEBI:30616"/>
    </ligand>
</feature>
<feature type="binding site" evidence="1">
    <location>
        <position position="68"/>
    </location>
    <ligand>
        <name>ATP</name>
        <dbReference type="ChEBI" id="CHEBI:30616"/>
    </ligand>
</feature>
<feature type="binding site" evidence="1">
    <location>
        <position position="69"/>
    </location>
    <ligand>
        <name>ATP</name>
        <dbReference type="ChEBI" id="CHEBI:30616"/>
    </ligand>
</feature>
<feature type="binding site" evidence="1">
    <location>
        <position position="69"/>
    </location>
    <ligand>
        <name>Mg(2+)</name>
        <dbReference type="ChEBI" id="CHEBI:18420"/>
    </ligand>
</feature>
<feature type="binding site" evidence="1">
    <location>
        <position position="70"/>
    </location>
    <ligand>
        <name>ATP</name>
        <dbReference type="ChEBI" id="CHEBI:30616"/>
    </ligand>
</feature>
<feature type="binding site" evidence="1">
    <location>
        <begin position="131"/>
        <end position="133"/>
    </location>
    <ligand>
        <name>ATP</name>
        <dbReference type="ChEBI" id="CHEBI:30616"/>
    </ligand>
</feature>
<feature type="binding site" evidence="1">
    <location>
        <position position="174"/>
    </location>
    <ligand>
        <name>ATP</name>
        <dbReference type="ChEBI" id="CHEBI:30616"/>
    </ligand>
</feature>
<feature type="binding site" evidence="1">
    <location>
        <position position="184"/>
    </location>
    <ligand>
        <name>ATP</name>
        <dbReference type="ChEBI" id="CHEBI:30616"/>
    </ligand>
</feature>
<feature type="binding site" evidence="1">
    <location>
        <position position="221"/>
    </location>
    <ligand>
        <name>ATP</name>
        <dbReference type="ChEBI" id="CHEBI:30616"/>
    </ligand>
</feature>
<feature type="binding site" evidence="1">
    <location>
        <position position="294"/>
    </location>
    <ligand>
        <name>DNA</name>
        <dbReference type="ChEBI" id="CHEBI:16991"/>
    </ligand>
</feature>
<feature type="binding site" evidence="1">
    <location>
        <position position="313"/>
    </location>
    <ligand>
        <name>DNA</name>
        <dbReference type="ChEBI" id="CHEBI:16991"/>
    </ligand>
</feature>
<feature type="binding site" evidence="1">
    <location>
        <position position="318"/>
    </location>
    <ligand>
        <name>DNA</name>
        <dbReference type="ChEBI" id="CHEBI:16991"/>
    </ligand>
</feature>
<reference key="1">
    <citation type="submission" date="2007-02" db="EMBL/GenBank/DDBJ databases">
        <title>Complete sequence of chromosome of Shewanella baltica OS155.</title>
        <authorList>
            <consortium name="US DOE Joint Genome Institute"/>
            <person name="Copeland A."/>
            <person name="Lucas S."/>
            <person name="Lapidus A."/>
            <person name="Barry K."/>
            <person name="Detter J.C."/>
            <person name="Glavina del Rio T."/>
            <person name="Hammon N."/>
            <person name="Israni S."/>
            <person name="Dalin E."/>
            <person name="Tice H."/>
            <person name="Pitluck S."/>
            <person name="Sims D.R."/>
            <person name="Brettin T."/>
            <person name="Bruce D."/>
            <person name="Han C."/>
            <person name="Tapia R."/>
            <person name="Brainard J."/>
            <person name="Schmutz J."/>
            <person name="Larimer F."/>
            <person name="Land M."/>
            <person name="Hauser L."/>
            <person name="Kyrpides N."/>
            <person name="Mikhailova N."/>
            <person name="Brettar I."/>
            <person name="Klappenbach J."/>
            <person name="Konstantinidis K."/>
            <person name="Rodrigues J."/>
            <person name="Tiedje J."/>
            <person name="Richardson P."/>
        </authorList>
    </citation>
    <scope>NUCLEOTIDE SEQUENCE [LARGE SCALE GENOMIC DNA]</scope>
    <source>
        <strain>OS155 / ATCC BAA-1091</strain>
    </source>
</reference>
<name>RUVB_SHEB5</name>
<comment type="function">
    <text evidence="1">The RuvA-RuvB-RuvC complex processes Holliday junction (HJ) DNA during genetic recombination and DNA repair, while the RuvA-RuvB complex plays an important role in the rescue of blocked DNA replication forks via replication fork reversal (RFR). RuvA specifically binds to HJ cruciform DNA, conferring on it an open structure. The RuvB hexamer acts as an ATP-dependent pump, pulling dsDNA into and through the RuvAB complex. RuvB forms 2 homohexamers on either side of HJ DNA bound by 1 or 2 RuvA tetramers; 4 subunits per hexamer contact DNA at a time. Coordinated motions by a converter formed by DNA-disengaged RuvB subunits stimulates ATP hydrolysis and nucleotide exchange. Immobilization of the converter enables RuvB to convert the ATP-contained energy into a lever motion, pulling 2 nucleotides of DNA out of the RuvA tetramer per ATP hydrolyzed, thus driving DNA branch migration. The RuvB motors rotate together with the DNA substrate, which together with the progressing nucleotide cycle form the mechanistic basis for DNA recombination by continuous HJ branch migration. Branch migration allows RuvC to scan DNA until it finds its consensus sequence, where it cleaves and resolves cruciform DNA.</text>
</comment>
<comment type="catalytic activity">
    <reaction evidence="1">
        <text>ATP + H2O = ADP + phosphate + H(+)</text>
        <dbReference type="Rhea" id="RHEA:13065"/>
        <dbReference type="ChEBI" id="CHEBI:15377"/>
        <dbReference type="ChEBI" id="CHEBI:15378"/>
        <dbReference type="ChEBI" id="CHEBI:30616"/>
        <dbReference type="ChEBI" id="CHEBI:43474"/>
        <dbReference type="ChEBI" id="CHEBI:456216"/>
    </reaction>
</comment>
<comment type="subunit">
    <text evidence="1">Homohexamer. Forms an RuvA(8)-RuvB(12)-Holliday junction (HJ) complex. HJ DNA is sandwiched between 2 RuvA tetramers; dsDNA enters through RuvA and exits via RuvB. An RuvB hexamer assembles on each DNA strand where it exits the tetramer. Each RuvB hexamer is contacted by two RuvA subunits (via domain III) on 2 adjacent RuvB subunits; this complex drives branch migration. In the full resolvosome a probable DNA-RuvA(4)-RuvB(12)-RuvC(2) complex forms which resolves the HJ.</text>
</comment>
<comment type="subcellular location">
    <subcellularLocation>
        <location evidence="1">Cytoplasm</location>
    </subcellularLocation>
</comment>
<comment type="domain">
    <text evidence="1">Has 3 domains, the large (RuvB-L) and small ATPase (RuvB-S) domains and the C-terminal head (RuvB-H) domain. The head domain binds DNA, while the ATPase domains jointly bind ATP, ADP or are empty depending on the state of the subunit in the translocation cycle. During a single DNA translocation step the structure of each domain remains the same, but their relative positions change.</text>
</comment>
<comment type="similarity">
    <text evidence="1">Belongs to the RuvB family.</text>
</comment>
<evidence type="ECO:0000255" key="1">
    <source>
        <dbReference type="HAMAP-Rule" id="MF_00016"/>
    </source>
</evidence>